<accession>B5FHE5</accession>
<gene>
    <name evidence="1" type="primary">rihC</name>
    <name type="ordered locus">SeD_A0056</name>
</gene>
<reference key="1">
    <citation type="journal article" date="2011" name="J. Bacteriol.">
        <title>Comparative genomics of 28 Salmonella enterica isolates: evidence for CRISPR-mediated adaptive sublineage evolution.</title>
        <authorList>
            <person name="Fricke W.F."/>
            <person name="Mammel M.K."/>
            <person name="McDermott P.F."/>
            <person name="Tartera C."/>
            <person name="White D.G."/>
            <person name="Leclerc J.E."/>
            <person name="Ravel J."/>
            <person name="Cebula T.A."/>
        </authorList>
    </citation>
    <scope>NUCLEOTIDE SEQUENCE [LARGE SCALE GENOMIC DNA]</scope>
    <source>
        <strain>CT_02021853</strain>
    </source>
</reference>
<dbReference type="EC" id="3.2.-.-" evidence="1"/>
<dbReference type="EMBL" id="CP001144">
    <property type="protein sequence ID" value="ACH74794.1"/>
    <property type="molecule type" value="Genomic_DNA"/>
</dbReference>
<dbReference type="RefSeq" id="WP_000127283.1">
    <property type="nucleotide sequence ID" value="NC_011205.1"/>
</dbReference>
<dbReference type="SMR" id="B5FHE5"/>
<dbReference type="KEGG" id="sed:SeD_A0056"/>
<dbReference type="HOGENOM" id="CLU_036838_2_2_6"/>
<dbReference type="Proteomes" id="UP000008322">
    <property type="component" value="Chromosome"/>
</dbReference>
<dbReference type="GO" id="GO:0005829">
    <property type="term" value="C:cytosol"/>
    <property type="evidence" value="ECO:0007669"/>
    <property type="project" value="TreeGrafter"/>
</dbReference>
<dbReference type="GO" id="GO:0008477">
    <property type="term" value="F:purine nucleosidase activity"/>
    <property type="evidence" value="ECO:0007669"/>
    <property type="project" value="TreeGrafter"/>
</dbReference>
<dbReference type="GO" id="GO:0006144">
    <property type="term" value="P:purine nucleobase metabolic process"/>
    <property type="evidence" value="ECO:0007669"/>
    <property type="project" value="UniProtKB-UniRule"/>
</dbReference>
<dbReference type="GO" id="GO:0006152">
    <property type="term" value="P:purine nucleoside catabolic process"/>
    <property type="evidence" value="ECO:0007669"/>
    <property type="project" value="TreeGrafter"/>
</dbReference>
<dbReference type="GO" id="GO:0006206">
    <property type="term" value="P:pyrimidine nucleobase metabolic process"/>
    <property type="evidence" value="ECO:0007669"/>
    <property type="project" value="UniProtKB-UniRule"/>
</dbReference>
<dbReference type="CDD" id="cd02651">
    <property type="entry name" value="nuc_hydro_IU_UC_XIUA"/>
    <property type="match status" value="1"/>
</dbReference>
<dbReference type="FunFam" id="3.90.245.10:FF:000002">
    <property type="entry name" value="Non-specific ribonucleoside hydrolase RihC"/>
    <property type="match status" value="1"/>
</dbReference>
<dbReference type="Gene3D" id="3.90.245.10">
    <property type="entry name" value="Ribonucleoside hydrolase-like"/>
    <property type="match status" value="1"/>
</dbReference>
<dbReference type="HAMAP" id="MF_01432">
    <property type="entry name" value="Nucleosid_hydro_RihC"/>
    <property type="match status" value="1"/>
</dbReference>
<dbReference type="InterPro" id="IPR001910">
    <property type="entry name" value="Inosine/uridine_hydrolase_dom"/>
</dbReference>
<dbReference type="InterPro" id="IPR023186">
    <property type="entry name" value="IUNH"/>
</dbReference>
<dbReference type="InterPro" id="IPR022976">
    <property type="entry name" value="Nucleosid_hydro_RihC_nonspecif"/>
</dbReference>
<dbReference type="InterPro" id="IPR036452">
    <property type="entry name" value="Ribo_hydro-like"/>
</dbReference>
<dbReference type="NCBIfam" id="NF008036">
    <property type="entry name" value="PRK10768.1"/>
    <property type="match status" value="1"/>
</dbReference>
<dbReference type="PANTHER" id="PTHR12304">
    <property type="entry name" value="INOSINE-URIDINE PREFERRING NUCLEOSIDE HYDROLASE"/>
    <property type="match status" value="1"/>
</dbReference>
<dbReference type="PANTHER" id="PTHR12304:SF15">
    <property type="entry name" value="NON-SPECIFIC RIBONUCLEOSIDE HYDROLASE RIHC"/>
    <property type="match status" value="1"/>
</dbReference>
<dbReference type="Pfam" id="PF01156">
    <property type="entry name" value="IU_nuc_hydro"/>
    <property type="match status" value="1"/>
</dbReference>
<dbReference type="SUPFAM" id="SSF53590">
    <property type="entry name" value="Nucleoside hydrolase"/>
    <property type="match status" value="1"/>
</dbReference>
<organism>
    <name type="scientific">Salmonella dublin (strain CT_02021853)</name>
    <dbReference type="NCBI Taxonomy" id="439851"/>
    <lineage>
        <taxon>Bacteria</taxon>
        <taxon>Pseudomonadati</taxon>
        <taxon>Pseudomonadota</taxon>
        <taxon>Gammaproteobacteria</taxon>
        <taxon>Enterobacterales</taxon>
        <taxon>Enterobacteriaceae</taxon>
        <taxon>Salmonella</taxon>
    </lineage>
</organism>
<name>RIHC_SALDC</name>
<proteinExistence type="inferred from homology"/>
<evidence type="ECO:0000255" key="1">
    <source>
        <dbReference type="HAMAP-Rule" id="MF_01432"/>
    </source>
</evidence>
<keyword id="KW-0326">Glycosidase</keyword>
<keyword id="KW-0378">Hydrolase</keyword>
<feature type="chain" id="PRO_1000145819" description="Non-specific ribonucleoside hydrolase RihC">
    <location>
        <begin position="1"/>
        <end position="306"/>
    </location>
</feature>
<feature type="active site" evidence="1">
    <location>
        <position position="235"/>
    </location>
</feature>
<sequence>MTASLHIILDTDPGIDDAAAIAAALFAPQLDLQLITTVAGNVSVEKTTRNALQLLHFWNSDIPLAQGAATPLLRPLRDAAYVHGESGMEGYDFVDHQRQPLAKPAFIAIRDVLMNAPEPMTLVAIGPLTNIALLLMHYPECACNIRRLVLMGGSAGRGNFTPNAEFNIAVDPEAAALVFRSGLEIVMCGLDVTNQAMLSPDFLNKLPALNRTGKMLHSLFNHYRSGSMRTGVRMHDLCAIAWLVRPELFTLQSCFVAVETQGQYTAGTTVVDIEGRLGQPANAQVALALDVDGFRQWVAEVFAYAP</sequence>
<comment type="function">
    <text evidence="1">Hydrolyzes both purine and pyrimidine ribonucleosides with a broad-substrate specificity.</text>
</comment>
<comment type="similarity">
    <text evidence="1">Belongs to the IUNH family. RihC subfamily.</text>
</comment>
<protein>
    <recommendedName>
        <fullName evidence="1">Non-specific ribonucleoside hydrolase RihC</fullName>
        <ecNumber evidence="1">3.2.-.-</ecNumber>
    </recommendedName>
    <alternativeName>
        <fullName evidence="1">Purine/pyrimidine ribonucleoside hydrolase</fullName>
    </alternativeName>
</protein>